<proteinExistence type="inferred from homology"/>
<organism>
    <name type="scientific">Aspergillus oryzae (strain ATCC 42149 / RIB 40)</name>
    <name type="common">Yellow koji mold</name>
    <dbReference type="NCBI Taxonomy" id="510516"/>
    <lineage>
        <taxon>Eukaryota</taxon>
        <taxon>Fungi</taxon>
        <taxon>Dikarya</taxon>
        <taxon>Ascomycota</taxon>
        <taxon>Pezizomycotina</taxon>
        <taxon>Eurotiomycetes</taxon>
        <taxon>Eurotiomycetidae</taxon>
        <taxon>Eurotiales</taxon>
        <taxon>Aspergillaceae</taxon>
        <taxon>Aspergillus</taxon>
        <taxon>Aspergillus subgen. Circumdati</taxon>
    </lineage>
</organism>
<dbReference type="EC" id="3.4.22.-"/>
<dbReference type="EMBL" id="BA000052">
    <property type="protein sequence ID" value="BAE60798.1"/>
    <property type="molecule type" value="Genomic_DNA"/>
</dbReference>
<dbReference type="RefSeq" id="XP_001727637.1">
    <property type="nucleotide sequence ID" value="XM_001727585.2"/>
</dbReference>
<dbReference type="SMR" id="Q2UCB7"/>
<dbReference type="STRING" id="510516.Q2UCB7"/>
<dbReference type="EnsemblFungi" id="BAE60798">
    <property type="protein sequence ID" value="BAE60798"/>
    <property type="gene ID" value="AO090012000660"/>
</dbReference>
<dbReference type="GeneID" id="5988111"/>
<dbReference type="KEGG" id="aor:AO090012000660"/>
<dbReference type="VEuPathDB" id="FungiDB:AO090012000660"/>
<dbReference type="HOGENOM" id="CLU_029389_0_2_1"/>
<dbReference type="OMA" id="EYGHHTP"/>
<dbReference type="OrthoDB" id="92588at5052"/>
<dbReference type="Proteomes" id="UP000006564">
    <property type="component" value="Chromosome 4"/>
</dbReference>
<dbReference type="GO" id="GO:0005737">
    <property type="term" value="C:cytoplasm"/>
    <property type="evidence" value="ECO:0007669"/>
    <property type="project" value="TreeGrafter"/>
</dbReference>
<dbReference type="GO" id="GO:0004197">
    <property type="term" value="F:cysteine-type endopeptidase activity"/>
    <property type="evidence" value="ECO:0007669"/>
    <property type="project" value="InterPro"/>
</dbReference>
<dbReference type="GO" id="GO:0006915">
    <property type="term" value="P:apoptotic process"/>
    <property type="evidence" value="ECO:0007669"/>
    <property type="project" value="UniProtKB-KW"/>
</dbReference>
<dbReference type="GO" id="GO:0006508">
    <property type="term" value="P:proteolysis"/>
    <property type="evidence" value="ECO:0007669"/>
    <property type="project" value="UniProtKB-KW"/>
</dbReference>
<dbReference type="Gene3D" id="3.40.50.12660">
    <property type="match status" value="1"/>
</dbReference>
<dbReference type="InterPro" id="IPR029030">
    <property type="entry name" value="Caspase-like_dom_sf"/>
</dbReference>
<dbReference type="InterPro" id="IPR050452">
    <property type="entry name" value="Metacaspase"/>
</dbReference>
<dbReference type="InterPro" id="IPR011600">
    <property type="entry name" value="Pept_C14_caspase"/>
</dbReference>
<dbReference type="PANTHER" id="PTHR48104:SF23">
    <property type="entry name" value="METACASPASE (EUROFUNG)"/>
    <property type="match status" value="1"/>
</dbReference>
<dbReference type="PANTHER" id="PTHR48104">
    <property type="entry name" value="METACASPASE-4"/>
    <property type="match status" value="1"/>
</dbReference>
<dbReference type="Pfam" id="PF00656">
    <property type="entry name" value="Peptidase_C14"/>
    <property type="match status" value="1"/>
</dbReference>
<dbReference type="SUPFAM" id="SSF52129">
    <property type="entry name" value="Caspase-like"/>
    <property type="match status" value="1"/>
</dbReference>
<protein>
    <recommendedName>
        <fullName>Metacaspase-1B</fullName>
        <ecNumber>3.4.22.-</ecNumber>
    </recommendedName>
</protein>
<evidence type="ECO:0000250" key="1"/>
<evidence type="ECO:0000255" key="2"/>
<evidence type="ECO:0000256" key="3">
    <source>
        <dbReference type="SAM" id="MobiDB-lite"/>
    </source>
</evidence>
<evidence type="ECO:0000305" key="4"/>
<reference key="1">
    <citation type="journal article" date="2005" name="Nature">
        <title>Genome sequencing and analysis of Aspergillus oryzae.</title>
        <authorList>
            <person name="Machida M."/>
            <person name="Asai K."/>
            <person name="Sano M."/>
            <person name="Tanaka T."/>
            <person name="Kumagai T."/>
            <person name="Terai G."/>
            <person name="Kusumoto K."/>
            <person name="Arima T."/>
            <person name="Akita O."/>
            <person name="Kashiwagi Y."/>
            <person name="Abe K."/>
            <person name="Gomi K."/>
            <person name="Horiuchi H."/>
            <person name="Kitamoto K."/>
            <person name="Kobayashi T."/>
            <person name="Takeuchi M."/>
            <person name="Denning D.W."/>
            <person name="Galagan J.E."/>
            <person name="Nierman W.C."/>
            <person name="Yu J."/>
            <person name="Archer D.B."/>
            <person name="Bennett J.W."/>
            <person name="Bhatnagar D."/>
            <person name="Cleveland T.E."/>
            <person name="Fedorova N.D."/>
            <person name="Gotoh O."/>
            <person name="Horikawa H."/>
            <person name="Hosoyama A."/>
            <person name="Ichinomiya M."/>
            <person name="Igarashi R."/>
            <person name="Iwashita K."/>
            <person name="Juvvadi P.R."/>
            <person name="Kato M."/>
            <person name="Kato Y."/>
            <person name="Kin T."/>
            <person name="Kokubun A."/>
            <person name="Maeda H."/>
            <person name="Maeyama N."/>
            <person name="Maruyama J."/>
            <person name="Nagasaki H."/>
            <person name="Nakajima T."/>
            <person name="Oda K."/>
            <person name="Okada K."/>
            <person name="Paulsen I."/>
            <person name="Sakamoto K."/>
            <person name="Sawano T."/>
            <person name="Takahashi M."/>
            <person name="Takase K."/>
            <person name="Terabayashi Y."/>
            <person name="Wortman J.R."/>
            <person name="Yamada O."/>
            <person name="Yamagata Y."/>
            <person name="Anazawa H."/>
            <person name="Hata Y."/>
            <person name="Koide Y."/>
            <person name="Komori T."/>
            <person name="Koyama Y."/>
            <person name="Minetoki T."/>
            <person name="Suharnan S."/>
            <person name="Tanaka A."/>
            <person name="Isono K."/>
            <person name="Kuhara S."/>
            <person name="Ogasawara N."/>
            <person name="Kikuchi H."/>
        </authorList>
    </citation>
    <scope>NUCLEOTIDE SEQUENCE [LARGE SCALE GENOMIC DNA]</scope>
    <source>
        <strain>ATCC 42149 / RIB 40</strain>
    </source>
</reference>
<feature type="propeptide" id="PRO_0000333630" evidence="2">
    <location>
        <begin position="1"/>
        <end status="unknown"/>
    </location>
</feature>
<feature type="chain" id="PRO_0000333631" description="Metacaspase-1B">
    <location>
        <begin status="unknown"/>
        <end position="419"/>
    </location>
</feature>
<feature type="region of interest" description="Disordered" evidence="3">
    <location>
        <begin position="1"/>
        <end position="109"/>
    </location>
</feature>
<feature type="compositionally biased region" description="Pro residues" evidence="3">
    <location>
        <begin position="33"/>
        <end position="50"/>
    </location>
</feature>
<feature type="compositionally biased region" description="Low complexity" evidence="3">
    <location>
        <begin position="51"/>
        <end position="66"/>
    </location>
</feature>
<feature type="compositionally biased region" description="Polar residues" evidence="3">
    <location>
        <begin position="82"/>
        <end position="93"/>
    </location>
</feature>
<feature type="active site" evidence="1">
    <location>
        <position position="210"/>
    </location>
</feature>
<feature type="active site" evidence="1">
    <location>
        <position position="266"/>
    </location>
</feature>
<comment type="function">
    <text evidence="1">Involved in cell death (apoptosis).</text>
</comment>
<comment type="similarity">
    <text evidence="4">Belongs to the peptidase C14B family.</text>
</comment>
<name>MCA1B_ASPOR</name>
<sequence>MYHPNYNYPPPQPGWGGGYYPPPQQHQQQQQWSPPPPQPYYSNGYPPPSQSPHSYSPPQYPPHGQYEYGHHTPTPPPSSGSQYRSYHSHSPSWGQMPPRPPMEAQQFGKGAPSNYRFQYSACTGRRKALLIGINYAGQPNALRGCINDVTNMSTFLHERYGYRREDMVILTDDQQNPMSVPTKANILRAMQWLVKDAQRNDSLFIHFSGHGGRTPDLDGDEEDGYDDVIYPVDYRTAGHIVDDDMHAIMVRPLQPGVRLTAIFDSCHSGTALDLPYVYSTQGILKEPNLAKEAAQDLFSAITSYGQGDFASVAQTAIGFLKKAALGESARERTVKTKTSPADVVMFSGSKDTQTSADTFQDGQARGALSWAFIKTLQARPNQSYLQLLNSIRSELEGKYSQKPQLSCSHPLDTNLLFVM</sequence>
<keyword id="KW-0053">Apoptosis</keyword>
<keyword id="KW-0378">Hydrolase</keyword>
<keyword id="KW-0645">Protease</keyword>
<keyword id="KW-1185">Reference proteome</keyword>
<keyword id="KW-0788">Thiol protease</keyword>
<keyword id="KW-0865">Zymogen</keyword>
<accession>Q2UCB7</accession>
<gene>
    <name type="primary">casB</name>
    <name type="ORF">AO090012000660</name>
</gene>